<dbReference type="EMBL" id="CP000127">
    <property type="protein sequence ID" value="ABA59499.1"/>
    <property type="molecule type" value="Genomic_DNA"/>
</dbReference>
<dbReference type="RefSeq" id="WP_002812330.1">
    <property type="nucleotide sequence ID" value="NC_007484.1"/>
</dbReference>
<dbReference type="SMR" id="Q3J6P7"/>
<dbReference type="FunCoup" id="Q3J6P7">
    <property type="interactions" value="385"/>
</dbReference>
<dbReference type="STRING" id="323261.Noc_3058"/>
<dbReference type="KEGG" id="noc:Noc_3058"/>
<dbReference type="eggNOG" id="COG1826">
    <property type="taxonomic scope" value="Bacteria"/>
</dbReference>
<dbReference type="HOGENOM" id="CLU_086034_5_1_6"/>
<dbReference type="InParanoid" id="Q3J6P7"/>
<dbReference type="Proteomes" id="UP000006838">
    <property type="component" value="Chromosome"/>
</dbReference>
<dbReference type="GO" id="GO:0033281">
    <property type="term" value="C:TAT protein transport complex"/>
    <property type="evidence" value="ECO:0007669"/>
    <property type="project" value="UniProtKB-UniRule"/>
</dbReference>
<dbReference type="GO" id="GO:0008320">
    <property type="term" value="F:protein transmembrane transporter activity"/>
    <property type="evidence" value="ECO:0007669"/>
    <property type="project" value="UniProtKB-UniRule"/>
</dbReference>
<dbReference type="GO" id="GO:0043953">
    <property type="term" value="P:protein transport by the Tat complex"/>
    <property type="evidence" value="ECO:0007669"/>
    <property type="project" value="UniProtKB-UniRule"/>
</dbReference>
<dbReference type="Gene3D" id="1.20.5.3310">
    <property type="match status" value="1"/>
</dbReference>
<dbReference type="HAMAP" id="MF_00236">
    <property type="entry name" value="TatA_E"/>
    <property type="match status" value="1"/>
</dbReference>
<dbReference type="InterPro" id="IPR003369">
    <property type="entry name" value="TatA/B/E"/>
</dbReference>
<dbReference type="InterPro" id="IPR006312">
    <property type="entry name" value="TatA/E"/>
</dbReference>
<dbReference type="NCBIfam" id="NF002813">
    <property type="entry name" value="PRK02958.1"/>
    <property type="match status" value="1"/>
</dbReference>
<dbReference type="NCBIfam" id="TIGR01411">
    <property type="entry name" value="tatAE"/>
    <property type="match status" value="1"/>
</dbReference>
<dbReference type="PANTHER" id="PTHR42982">
    <property type="entry name" value="SEC-INDEPENDENT PROTEIN TRANSLOCASE PROTEIN TATA"/>
    <property type="match status" value="1"/>
</dbReference>
<dbReference type="PANTHER" id="PTHR42982:SF1">
    <property type="entry name" value="SEC-INDEPENDENT PROTEIN TRANSLOCASE PROTEIN TATA"/>
    <property type="match status" value="1"/>
</dbReference>
<dbReference type="Pfam" id="PF02416">
    <property type="entry name" value="TatA_B_E"/>
    <property type="match status" value="1"/>
</dbReference>
<proteinExistence type="inferred from homology"/>
<name>TATA_NITOC</name>
<organism>
    <name type="scientific">Nitrosococcus oceani (strain ATCC 19707 / BCRC 17464 / JCM 30415 / NCIMB 11848 / C-107)</name>
    <dbReference type="NCBI Taxonomy" id="323261"/>
    <lineage>
        <taxon>Bacteria</taxon>
        <taxon>Pseudomonadati</taxon>
        <taxon>Pseudomonadota</taxon>
        <taxon>Gammaproteobacteria</taxon>
        <taxon>Chromatiales</taxon>
        <taxon>Chromatiaceae</taxon>
        <taxon>Nitrosococcus</taxon>
    </lineage>
</organism>
<evidence type="ECO:0000255" key="1">
    <source>
        <dbReference type="HAMAP-Rule" id="MF_00236"/>
    </source>
</evidence>
<evidence type="ECO:0000256" key="2">
    <source>
        <dbReference type="SAM" id="MobiDB-lite"/>
    </source>
</evidence>
<reference key="1">
    <citation type="journal article" date="2006" name="Appl. Environ. Microbiol.">
        <title>Complete genome sequence of the marine, chemolithoautotrophic, ammonia-oxidizing bacterium Nitrosococcus oceani ATCC 19707.</title>
        <authorList>
            <person name="Klotz M.G."/>
            <person name="Arp D.J."/>
            <person name="Chain P.S.G."/>
            <person name="El-Sheikh A.F."/>
            <person name="Hauser L.J."/>
            <person name="Hommes N.G."/>
            <person name="Larimer F.W."/>
            <person name="Malfatti S.A."/>
            <person name="Norton J.M."/>
            <person name="Poret-Peterson A.T."/>
            <person name="Vergez L.M."/>
            <person name="Ward B.B."/>
        </authorList>
    </citation>
    <scope>NUCLEOTIDE SEQUENCE [LARGE SCALE GENOMIC DNA]</scope>
    <source>
        <strain>ATCC 19707 / BCRC 17464 / JCM 30415 / NCIMB 11848 / C-107</strain>
    </source>
</reference>
<feature type="chain" id="PRO_0000336633" description="Sec-independent protein translocase protein TatA">
    <location>
        <begin position="1"/>
        <end position="90"/>
    </location>
</feature>
<feature type="transmembrane region" description="Helical" evidence="1">
    <location>
        <begin position="2"/>
        <end position="22"/>
    </location>
</feature>
<feature type="region of interest" description="Disordered" evidence="2">
    <location>
        <begin position="45"/>
        <end position="90"/>
    </location>
</feature>
<feature type="compositionally biased region" description="Basic and acidic residues" evidence="2">
    <location>
        <begin position="45"/>
        <end position="68"/>
    </location>
</feature>
<feature type="compositionally biased region" description="Basic and acidic residues" evidence="2">
    <location>
        <begin position="76"/>
        <end position="90"/>
    </location>
</feature>
<keyword id="KW-0997">Cell inner membrane</keyword>
<keyword id="KW-1003">Cell membrane</keyword>
<keyword id="KW-0472">Membrane</keyword>
<keyword id="KW-0653">Protein transport</keyword>
<keyword id="KW-1185">Reference proteome</keyword>
<keyword id="KW-0811">Translocation</keyword>
<keyword id="KW-0812">Transmembrane</keyword>
<keyword id="KW-1133">Transmembrane helix</keyword>
<keyword id="KW-0813">Transport</keyword>
<sequence>MGVGGISIWQLLIVLVIILLLFGTKKLRSIGTDLGSAIKGFRNSLRDEERRDAEEAATIEHKQAHKAENPSQRQQADADFKIKSGNDEHK</sequence>
<comment type="function">
    <text evidence="1">Part of the twin-arginine translocation (Tat) system that transports large folded proteins containing a characteristic twin-arginine motif in their signal peptide across membranes. TatA could form the protein-conducting channel of the Tat system.</text>
</comment>
<comment type="subunit">
    <text evidence="1">The Tat system comprises two distinct complexes: a TatABC complex, containing multiple copies of TatA, TatB and TatC subunits, and a separate TatA complex, containing only TatA subunits. Substrates initially bind to the TatABC complex, which probably triggers association of the separate TatA complex to form the active translocon.</text>
</comment>
<comment type="subcellular location">
    <subcellularLocation>
        <location evidence="1">Cell inner membrane</location>
        <topology evidence="1">Single-pass membrane protein</topology>
    </subcellularLocation>
</comment>
<comment type="similarity">
    <text evidence="1">Belongs to the TatA/E family.</text>
</comment>
<gene>
    <name evidence="1" type="primary">tatA</name>
    <name type="ordered locus">Noc_3058</name>
</gene>
<protein>
    <recommendedName>
        <fullName evidence="1">Sec-independent protein translocase protein TatA</fullName>
    </recommendedName>
</protein>
<accession>Q3J6P7</accession>